<feature type="chain" id="PRO_0000088975" description="Actin, cytoplasmic">
    <location>
        <begin position="1"/>
        <end position="357"/>
    </location>
</feature>
<proteinExistence type="inferred from homology"/>
<accession>P02583</accession>
<evidence type="ECO:0000250" key="1">
    <source>
        <dbReference type="UniProtKB" id="P68137"/>
    </source>
</evidence>
<evidence type="ECO:0000305" key="2"/>
<protein>
    <recommendedName>
        <fullName>Actin, cytoplasmic</fullName>
        <ecNumber evidence="1">3.6.4.-</ecNumber>
    </recommendedName>
    <alternativeName>
        <fullName>Actin, micronuclear</fullName>
    </alternativeName>
</protein>
<name>ACT2_OXYFA</name>
<sequence>MSDQQTCVIDNGSGVVKAGFAGEDAPRAVFPSIVGRPKNVSALIGVDSASEYLGDEAQQKRGVLKIWNHTFYVELRVQPDEHPILLTEAPLSPKTNREKMTQIMFETFNVPALYVAIQAVLSLYSRGRTTGIVCDAGDGVTHTVPIYEGFSIPHAVSRIQLAGRDLTTFLAKLLTERGYNFTSSAELEIVRDIKEKLCFVALNYESALKQSHDSSQFEKNYELPDGKVITIGSERFRCPEYLFKPLEMNGRELDSIQDLTYKSIQECDVDVRRDLYQNIILSGGTTMYEGIGERLLKEIENRAPKSINVKVIASPDRRFAVWRGGSTLTSLSTFASMWITKEDYDENGASIVHRKCI</sequence>
<organism>
    <name type="scientific">Oxytricha fallax</name>
    <dbReference type="NCBI Taxonomy" id="5944"/>
    <lineage>
        <taxon>Eukaryota</taxon>
        <taxon>Sar</taxon>
        <taxon>Alveolata</taxon>
        <taxon>Ciliophora</taxon>
        <taxon>Intramacronucleata</taxon>
        <taxon>Spirotrichea</taxon>
        <taxon>Stichotrichia</taxon>
        <taxon>Sporadotrichida</taxon>
        <taxon>Oxytrichidae</taxon>
        <taxon>Oxytrichinae</taxon>
        <taxon>Oxytricha</taxon>
    </lineage>
</organism>
<dbReference type="EC" id="3.6.4.-" evidence="1"/>
<dbReference type="PIR" id="A03009">
    <property type="entry name" value="ATOQ"/>
</dbReference>
<dbReference type="SMR" id="P02583"/>
<dbReference type="GO" id="GO:0005737">
    <property type="term" value="C:cytoplasm"/>
    <property type="evidence" value="ECO:0007669"/>
    <property type="project" value="UniProtKB-KW"/>
</dbReference>
<dbReference type="GO" id="GO:0005856">
    <property type="term" value="C:cytoskeleton"/>
    <property type="evidence" value="ECO:0007669"/>
    <property type="project" value="UniProtKB-SubCell"/>
</dbReference>
<dbReference type="GO" id="GO:0005524">
    <property type="term" value="F:ATP binding"/>
    <property type="evidence" value="ECO:0007669"/>
    <property type="project" value="UniProtKB-KW"/>
</dbReference>
<dbReference type="GO" id="GO:0016787">
    <property type="term" value="F:hydrolase activity"/>
    <property type="evidence" value="ECO:0007669"/>
    <property type="project" value="UniProtKB-KW"/>
</dbReference>
<dbReference type="FunFam" id="3.30.420.40:FF:000050">
    <property type="entry name" value="Actin, alpha skeletal muscle"/>
    <property type="match status" value="2"/>
</dbReference>
<dbReference type="FunFam" id="3.90.640.10:FF:000047">
    <property type="entry name" value="Actin, alpha skeletal muscle"/>
    <property type="match status" value="1"/>
</dbReference>
<dbReference type="FunFam" id="3.30.420.40:FF:000058">
    <property type="entry name" value="Putative actin-related protein 5"/>
    <property type="match status" value="1"/>
</dbReference>
<dbReference type="Gene3D" id="3.30.420.40">
    <property type="match status" value="2"/>
</dbReference>
<dbReference type="Gene3D" id="3.90.640.10">
    <property type="entry name" value="Actin, Chain A, domain 4"/>
    <property type="match status" value="1"/>
</dbReference>
<dbReference type="InterPro" id="IPR004000">
    <property type="entry name" value="Actin"/>
</dbReference>
<dbReference type="InterPro" id="IPR020902">
    <property type="entry name" value="Actin/actin-like_CS"/>
</dbReference>
<dbReference type="InterPro" id="IPR004001">
    <property type="entry name" value="Actin_CS"/>
</dbReference>
<dbReference type="InterPro" id="IPR043129">
    <property type="entry name" value="ATPase_NBD"/>
</dbReference>
<dbReference type="PANTHER" id="PTHR11937">
    <property type="entry name" value="ACTIN"/>
    <property type="match status" value="1"/>
</dbReference>
<dbReference type="Pfam" id="PF00022">
    <property type="entry name" value="Actin"/>
    <property type="match status" value="1"/>
</dbReference>
<dbReference type="PRINTS" id="PR00190">
    <property type="entry name" value="ACTIN"/>
</dbReference>
<dbReference type="SMART" id="SM00268">
    <property type="entry name" value="ACTIN"/>
    <property type="match status" value="1"/>
</dbReference>
<dbReference type="SUPFAM" id="SSF53067">
    <property type="entry name" value="Actin-like ATPase domain"/>
    <property type="match status" value="2"/>
</dbReference>
<dbReference type="PROSITE" id="PS00406">
    <property type="entry name" value="ACTINS_1"/>
    <property type="match status" value="1"/>
</dbReference>
<dbReference type="PROSITE" id="PS00432">
    <property type="entry name" value="ACTINS_2"/>
    <property type="match status" value="1"/>
</dbReference>
<dbReference type="PROSITE" id="PS01132">
    <property type="entry name" value="ACTINS_ACT_LIKE"/>
    <property type="match status" value="1"/>
</dbReference>
<reference key="1">
    <citation type="journal article" date="1982" name="Nature">
        <title>Nucleotide sequence of a macronuclear gene for actin in Oxytricha fallax.</title>
        <authorList>
            <person name="Kaine B.P."/>
            <person name="Spear B.B."/>
        </authorList>
    </citation>
    <scope>NUCLEOTIDE SEQUENCE</scope>
</reference>
<keyword id="KW-0067">ATP-binding</keyword>
<keyword id="KW-0963">Cytoplasm</keyword>
<keyword id="KW-0206">Cytoskeleton</keyword>
<keyword id="KW-0378">Hydrolase</keyword>
<keyword id="KW-0547">Nucleotide-binding</keyword>
<comment type="function">
    <text>Actins are highly conserved proteins that are involved in various types of cell motility and are ubiquitously expressed in all eukaryotic cells.</text>
</comment>
<comment type="catalytic activity">
    <reaction evidence="1">
        <text>ATP + H2O = ADP + phosphate + H(+)</text>
        <dbReference type="Rhea" id="RHEA:13065"/>
        <dbReference type="ChEBI" id="CHEBI:15377"/>
        <dbReference type="ChEBI" id="CHEBI:15378"/>
        <dbReference type="ChEBI" id="CHEBI:30616"/>
        <dbReference type="ChEBI" id="CHEBI:43474"/>
        <dbReference type="ChEBI" id="CHEBI:456216"/>
    </reaction>
</comment>
<comment type="subcellular location">
    <subcellularLocation>
        <location>Cytoplasm</location>
        <location>Cytoskeleton</location>
    </subcellularLocation>
</comment>
<comment type="PTM">
    <text>Met-1 may be removed after translation.</text>
</comment>
<comment type="similarity">
    <text evidence="2">Belongs to the actin family.</text>
</comment>